<proteinExistence type="inferred from homology"/>
<gene>
    <name evidence="1" type="primary">murA</name>
    <name type="ordered locus">VSAL_I0511</name>
</gene>
<evidence type="ECO:0000255" key="1">
    <source>
        <dbReference type="HAMAP-Rule" id="MF_00111"/>
    </source>
</evidence>
<sequence>MYKFRIQGSDKPLSGEVTISGAKNAALPILFAALLAEEPVEVANVPKLRDVDTTIELLQRLGAKVSRNGSVHIDASEVNNFCAPYDLVKTMRASIWALGPLVARFGKGQVSLPGGCAIGARPVDLHIHGLEQLGATIKLEDGYVKAEVDGRLKGAHIVMDKVSVGATITVMCAATLAEGTTILENAAREPEIVDTAHFLNAIGAKVSGMGTDTITIEGVERLGGGYHEVVADRIETGTFLVAAAVSGGKVVCKNTKASLLESVLAKLEEAGAKVESGEDWISLDMTGRELKAVNIRTAPHPAFPTDMQAQFTLLNMMAKGPGIITETIFENRFMHIPELQRMGAHAEIEGNTAICGDTDGLSGAQVMATDLRASASLVIAGCIAKGETIVDRIYHIDRGYDKIEDKLTALGANIERVRSSEL</sequence>
<keyword id="KW-0131">Cell cycle</keyword>
<keyword id="KW-0132">Cell division</keyword>
<keyword id="KW-0133">Cell shape</keyword>
<keyword id="KW-0961">Cell wall biogenesis/degradation</keyword>
<keyword id="KW-0963">Cytoplasm</keyword>
<keyword id="KW-0573">Peptidoglycan synthesis</keyword>
<keyword id="KW-0670">Pyruvate</keyword>
<keyword id="KW-0808">Transferase</keyword>
<comment type="function">
    <text evidence="1">Cell wall formation. Adds enolpyruvyl to UDP-N-acetylglucosamine.</text>
</comment>
<comment type="catalytic activity">
    <reaction evidence="1">
        <text>phosphoenolpyruvate + UDP-N-acetyl-alpha-D-glucosamine = UDP-N-acetyl-3-O-(1-carboxyvinyl)-alpha-D-glucosamine + phosphate</text>
        <dbReference type="Rhea" id="RHEA:18681"/>
        <dbReference type="ChEBI" id="CHEBI:43474"/>
        <dbReference type="ChEBI" id="CHEBI:57705"/>
        <dbReference type="ChEBI" id="CHEBI:58702"/>
        <dbReference type="ChEBI" id="CHEBI:68483"/>
        <dbReference type="EC" id="2.5.1.7"/>
    </reaction>
</comment>
<comment type="pathway">
    <text evidence="1">Cell wall biogenesis; peptidoglycan biosynthesis.</text>
</comment>
<comment type="subcellular location">
    <subcellularLocation>
        <location evidence="1">Cytoplasm</location>
    </subcellularLocation>
</comment>
<comment type="similarity">
    <text evidence="1">Belongs to the EPSP synthase family. MurA subfamily.</text>
</comment>
<accession>B6EMB5</accession>
<reference key="1">
    <citation type="journal article" date="2008" name="BMC Genomics">
        <title>The genome sequence of the fish pathogen Aliivibrio salmonicida strain LFI1238 shows extensive evidence of gene decay.</title>
        <authorList>
            <person name="Hjerde E."/>
            <person name="Lorentzen M.S."/>
            <person name="Holden M.T."/>
            <person name="Seeger K."/>
            <person name="Paulsen S."/>
            <person name="Bason N."/>
            <person name="Churcher C."/>
            <person name="Harris D."/>
            <person name="Norbertczak H."/>
            <person name="Quail M.A."/>
            <person name="Sanders S."/>
            <person name="Thurston S."/>
            <person name="Parkhill J."/>
            <person name="Willassen N.P."/>
            <person name="Thomson N.R."/>
        </authorList>
    </citation>
    <scope>NUCLEOTIDE SEQUENCE [LARGE SCALE GENOMIC DNA]</scope>
    <source>
        <strain>LFI1238</strain>
    </source>
</reference>
<dbReference type="EC" id="2.5.1.7" evidence="1"/>
<dbReference type="EMBL" id="FM178379">
    <property type="protein sequence ID" value="CAQ78196.1"/>
    <property type="molecule type" value="Genomic_DNA"/>
</dbReference>
<dbReference type="RefSeq" id="WP_012549323.1">
    <property type="nucleotide sequence ID" value="NC_011312.1"/>
</dbReference>
<dbReference type="SMR" id="B6EMB5"/>
<dbReference type="KEGG" id="vsa:VSAL_I0511"/>
<dbReference type="eggNOG" id="COG0766">
    <property type="taxonomic scope" value="Bacteria"/>
</dbReference>
<dbReference type="HOGENOM" id="CLU_027387_0_0_6"/>
<dbReference type="UniPathway" id="UPA00219"/>
<dbReference type="Proteomes" id="UP000001730">
    <property type="component" value="Chromosome 1"/>
</dbReference>
<dbReference type="GO" id="GO:0005737">
    <property type="term" value="C:cytoplasm"/>
    <property type="evidence" value="ECO:0007669"/>
    <property type="project" value="UniProtKB-SubCell"/>
</dbReference>
<dbReference type="GO" id="GO:0008760">
    <property type="term" value="F:UDP-N-acetylglucosamine 1-carboxyvinyltransferase activity"/>
    <property type="evidence" value="ECO:0007669"/>
    <property type="project" value="UniProtKB-UniRule"/>
</dbReference>
<dbReference type="GO" id="GO:0051301">
    <property type="term" value="P:cell division"/>
    <property type="evidence" value="ECO:0007669"/>
    <property type="project" value="UniProtKB-KW"/>
</dbReference>
<dbReference type="GO" id="GO:0071555">
    <property type="term" value="P:cell wall organization"/>
    <property type="evidence" value="ECO:0007669"/>
    <property type="project" value="UniProtKB-KW"/>
</dbReference>
<dbReference type="GO" id="GO:0009252">
    <property type="term" value="P:peptidoglycan biosynthetic process"/>
    <property type="evidence" value="ECO:0007669"/>
    <property type="project" value="UniProtKB-UniRule"/>
</dbReference>
<dbReference type="GO" id="GO:0008360">
    <property type="term" value="P:regulation of cell shape"/>
    <property type="evidence" value="ECO:0007669"/>
    <property type="project" value="UniProtKB-KW"/>
</dbReference>
<dbReference type="GO" id="GO:0019277">
    <property type="term" value="P:UDP-N-acetylgalactosamine biosynthetic process"/>
    <property type="evidence" value="ECO:0007669"/>
    <property type="project" value="InterPro"/>
</dbReference>
<dbReference type="CDD" id="cd01555">
    <property type="entry name" value="UdpNAET"/>
    <property type="match status" value="1"/>
</dbReference>
<dbReference type="FunFam" id="3.65.10.10:FF:000001">
    <property type="entry name" value="UDP-N-acetylglucosamine 1-carboxyvinyltransferase"/>
    <property type="match status" value="1"/>
</dbReference>
<dbReference type="Gene3D" id="3.65.10.10">
    <property type="entry name" value="Enolpyruvate transferase domain"/>
    <property type="match status" value="2"/>
</dbReference>
<dbReference type="HAMAP" id="MF_00111">
    <property type="entry name" value="MurA"/>
    <property type="match status" value="1"/>
</dbReference>
<dbReference type="InterPro" id="IPR001986">
    <property type="entry name" value="Enolpyruvate_Tfrase_dom"/>
</dbReference>
<dbReference type="InterPro" id="IPR036968">
    <property type="entry name" value="Enolpyruvate_Tfrase_sf"/>
</dbReference>
<dbReference type="InterPro" id="IPR050068">
    <property type="entry name" value="MurA_subfamily"/>
</dbReference>
<dbReference type="InterPro" id="IPR013792">
    <property type="entry name" value="RNA3'P_cycl/enolpyr_Trfase_a/b"/>
</dbReference>
<dbReference type="InterPro" id="IPR005750">
    <property type="entry name" value="UDP_GlcNAc_COvinyl_MurA"/>
</dbReference>
<dbReference type="NCBIfam" id="TIGR01072">
    <property type="entry name" value="murA"/>
    <property type="match status" value="1"/>
</dbReference>
<dbReference type="NCBIfam" id="NF006873">
    <property type="entry name" value="PRK09369.1"/>
    <property type="match status" value="1"/>
</dbReference>
<dbReference type="PANTHER" id="PTHR43783">
    <property type="entry name" value="UDP-N-ACETYLGLUCOSAMINE 1-CARBOXYVINYLTRANSFERASE"/>
    <property type="match status" value="1"/>
</dbReference>
<dbReference type="PANTHER" id="PTHR43783:SF1">
    <property type="entry name" value="UDP-N-ACETYLGLUCOSAMINE 1-CARBOXYVINYLTRANSFERASE"/>
    <property type="match status" value="1"/>
</dbReference>
<dbReference type="Pfam" id="PF00275">
    <property type="entry name" value="EPSP_synthase"/>
    <property type="match status" value="1"/>
</dbReference>
<dbReference type="SUPFAM" id="SSF55205">
    <property type="entry name" value="EPT/RTPC-like"/>
    <property type="match status" value="1"/>
</dbReference>
<feature type="chain" id="PRO_1000094669" description="UDP-N-acetylglucosamine 1-carboxyvinyltransferase">
    <location>
        <begin position="1"/>
        <end position="422"/>
    </location>
</feature>
<feature type="active site" description="Proton donor" evidence="1">
    <location>
        <position position="116"/>
    </location>
</feature>
<feature type="binding site" evidence="1">
    <location>
        <begin position="23"/>
        <end position="24"/>
    </location>
    <ligand>
        <name>phosphoenolpyruvate</name>
        <dbReference type="ChEBI" id="CHEBI:58702"/>
    </ligand>
</feature>
<feature type="binding site" evidence="1">
    <location>
        <position position="92"/>
    </location>
    <ligand>
        <name>UDP-N-acetyl-alpha-D-glucosamine</name>
        <dbReference type="ChEBI" id="CHEBI:57705"/>
    </ligand>
</feature>
<feature type="binding site" evidence="1">
    <location>
        <begin position="121"/>
        <end position="125"/>
    </location>
    <ligand>
        <name>UDP-N-acetyl-alpha-D-glucosamine</name>
        <dbReference type="ChEBI" id="CHEBI:57705"/>
    </ligand>
</feature>
<feature type="binding site" evidence="1">
    <location>
        <begin position="161"/>
        <end position="164"/>
    </location>
    <ligand>
        <name>UDP-N-acetyl-alpha-D-glucosamine</name>
        <dbReference type="ChEBI" id="CHEBI:57705"/>
    </ligand>
</feature>
<feature type="binding site" evidence="1">
    <location>
        <position position="306"/>
    </location>
    <ligand>
        <name>UDP-N-acetyl-alpha-D-glucosamine</name>
        <dbReference type="ChEBI" id="CHEBI:57705"/>
    </ligand>
</feature>
<feature type="binding site" evidence="1">
    <location>
        <position position="328"/>
    </location>
    <ligand>
        <name>UDP-N-acetyl-alpha-D-glucosamine</name>
        <dbReference type="ChEBI" id="CHEBI:57705"/>
    </ligand>
</feature>
<feature type="modified residue" description="2-(S-cysteinyl)pyruvic acid O-phosphothioketal" evidence="1">
    <location>
        <position position="116"/>
    </location>
</feature>
<protein>
    <recommendedName>
        <fullName evidence="1">UDP-N-acetylglucosamine 1-carboxyvinyltransferase</fullName>
        <ecNumber evidence="1">2.5.1.7</ecNumber>
    </recommendedName>
    <alternativeName>
        <fullName evidence="1">Enoylpyruvate transferase</fullName>
    </alternativeName>
    <alternativeName>
        <fullName evidence="1">UDP-N-acetylglucosamine enolpyruvyl transferase</fullName>
        <shortName evidence="1">EPT</shortName>
    </alternativeName>
</protein>
<name>MURA_ALISL</name>
<organism>
    <name type="scientific">Aliivibrio salmonicida (strain LFI1238)</name>
    <name type="common">Vibrio salmonicida (strain LFI1238)</name>
    <dbReference type="NCBI Taxonomy" id="316275"/>
    <lineage>
        <taxon>Bacteria</taxon>
        <taxon>Pseudomonadati</taxon>
        <taxon>Pseudomonadota</taxon>
        <taxon>Gammaproteobacteria</taxon>
        <taxon>Vibrionales</taxon>
        <taxon>Vibrionaceae</taxon>
        <taxon>Aliivibrio</taxon>
    </lineage>
</organism>